<feature type="chain" id="PRO_0000158243" description="Imidazoleglycerol-phosphate dehydratase">
    <location>
        <begin position="1"/>
        <end position="224"/>
    </location>
</feature>
<gene>
    <name type="primary">HIS3</name>
</gene>
<organism>
    <name type="scientific">Cyberlindnera jadinii</name>
    <name type="common">Torula yeast</name>
    <name type="synonym">Pichia jadinii</name>
    <dbReference type="NCBI Taxonomy" id="4903"/>
    <lineage>
        <taxon>Eukaryota</taxon>
        <taxon>Fungi</taxon>
        <taxon>Dikarya</taxon>
        <taxon>Ascomycota</taxon>
        <taxon>Saccharomycotina</taxon>
        <taxon>Saccharomycetes</taxon>
        <taxon>Phaffomycetales</taxon>
        <taxon>Phaffomycetaceae</taxon>
        <taxon>Cyberlindnera</taxon>
    </lineage>
</organism>
<protein>
    <recommendedName>
        <fullName>Imidazoleglycerol-phosphate dehydratase</fullName>
        <shortName>IGPD</shortName>
        <ecNumber>4.2.1.19</ecNumber>
    </recommendedName>
</protein>
<name>HIS7_CYBJA</name>
<sequence>MAERTVKPQRRALVNRTTNETKIQISLSLDGGYVTVPESIFKDKKYDDATQVTSSQVISINTGVGFLDHMIHALAKHGGWSLIVECIGDLHIDDHHTTEDVGIALGDAVKEALAYRGVKRFGSGFAPLDEALSRAVVDLSNRPFAVVELGLKREKIGDLSCEMIPHFLESFAQAAHITMHVDCLRGFNDHHRAESAFKALAVAIKESISSNGTNDVPSTKGVLF</sequence>
<reference key="1">
    <citation type="journal article" date="2004" name="Biomol. Eng.">
        <title>Cloning and sequence analysis of the Candida utilis HIS3 gene.</title>
        <authorList>
            <person name="Basabe L."/>
            <person name="Dominguez I."/>
            <person name="Chavez F.P."/>
        </authorList>
    </citation>
    <scope>NUCLEOTIDE SEQUENCE [GENOMIC DNA]</scope>
    <source>
        <strain>ATCC 9256 / CBS 841 / DSM 70167 / JCM 2311 / NBRC 0626 / NRRL Y-1084 / VKM Y-768</strain>
    </source>
</reference>
<proteinExistence type="inferred from homology"/>
<keyword id="KW-0028">Amino-acid biosynthesis</keyword>
<keyword id="KW-0368">Histidine biosynthesis</keyword>
<keyword id="KW-0456">Lyase</keyword>
<comment type="catalytic activity">
    <reaction>
        <text>D-erythro-1-(imidazol-4-yl)glycerol 3-phosphate = 3-(imidazol-4-yl)-2-oxopropyl phosphate + H2O</text>
        <dbReference type="Rhea" id="RHEA:11040"/>
        <dbReference type="ChEBI" id="CHEBI:15377"/>
        <dbReference type="ChEBI" id="CHEBI:57766"/>
        <dbReference type="ChEBI" id="CHEBI:58278"/>
        <dbReference type="EC" id="4.2.1.19"/>
    </reaction>
</comment>
<comment type="pathway">
    <text>Amino-acid biosynthesis; L-histidine biosynthesis; L-histidine from 5-phospho-alpha-D-ribose 1-diphosphate: step 6/9.</text>
</comment>
<comment type="similarity">
    <text evidence="1">Belongs to the imidazoleglycerol-phosphate dehydratase family.</text>
</comment>
<dbReference type="EC" id="4.2.1.19"/>
<dbReference type="EMBL" id="Y12658">
    <property type="protein sequence ID" value="CAA73207.1"/>
    <property type="molecule type" value="Genomic_DNA"/>
</dbReference>
<dbReference type="SMR" id="O94126"/>
<dbReference type="UniPathway" id="UPA00031">
    <property type="reaction ID" value="UER00011"/>
</dbReference>
<dbReference type="GO" id="GO:0004424">
    <property type="term" value="F:imidazoleglycerol-phosphate dehydratase activity"/>
    <property type="evidence" value="ECO:0007669"/>
    <property type="project" value="UniProtKB-EC"/>
</dbReference>
<dbReference type="GO" id="GO:0000105">
    <property type="term" value="P:L-histidine biosynthetic process"/>
    <property type="evidence" value="ECO:0007669"/>
    <property type="project" value="UniProtKB-UniPathway"/>
</dbReference>
<dbReference type="CDD" id="cd07914">
    <property type="entry name" value="IGPD"/>
    <property type="match status" value="1"/>
</dbReference>
<dbReference type="FunFam" id="3.30.230.40:FF:000005">
    <property type="entry name" value="Imidazoleglycerol-phosphate dehydratase"/>
    <property type="match status" value="1"/>
</dbReference>
<dbReference type="FunFam" id="3.30.230.40:FF:000001">
    <property type="entry name" value="Imidazoleglycerol-phosphate dehydratase HisB"/>
    <property type="match status" value="1"/>
</dbReference>
<dbReference type="Gene3D" id="3.30.230.40">
    <property type="entry name" value="Imidazole glycerol phosphate dehydratase, domain 1"/>
    <property type="match status" value="2"/>
</dbReference>
<dbReference type="HAMAP" id="MF_00076">
    <property type="entry name" value="HisB"/>
    <property type="match status" value="1"/>
</dbReference>
<dbReference type="InterPro" id="IPR038494">
    <property type="entry name" value="IGPD_sf"/>
</dbReference>
<dbReference type="InterPro" id="IPR000807">
    <property type="entry name" value="ImidazoleglycerolP_deHydtase"/>
</dbReference>
<dbReference type="InterPro" id="IPR020565">
    <property type="entry name" value="ImidazoleglycerP_deHydtase_CS"/>
</dbReference>
<dbReference type="InterPro" id="IPR020568">
    <property type="entry name" value="Ribosomal_Su5_D2-typ_SF"/>
</dbReference>
<dbReference type="PANTHER" id="PTHR23133:SF2">
    <property type="entry name" value="IMIDAZOLEGLYCEROL-PHOSPHATE DEHYDRATASE"/>
    <property type="match status" value="1"/>
</dbReference>
<dbReference type="PANTHER" id="PTHR23133">
    <property type="entry name" value="IMIDAZOLEGLYCEROL-PHOSPHATE DEHYDRATASE HIS7"/>
    <property type="match status" value="1"/>
</dbReference>
<dbReference type="Pfam" id="PF00475">
    <property type="entry name" value="IGPD"/>
    <property type="match status" value="1"/>
</dbReference>
<dbReference type="SUPFAM" id="SSF54211">
    <property type="entry name" value="Ribosomal protein S5 domain 2-like"/>
    <property type="match status" value="2"/>
</dbReference>
<dbReference type="PROSITE" id="PS00954">
    <property type="entry name" value="IGP_DEHYDRATASE_1"/>
    <property type="match status" value="1"/>
</dbReference>
<dbReference type="PROSITE" id="PS00955">
    <property type="entry name" value="IGP_DEHYDRATASE_2"/>
    <property type="match status" value="1"/>
</dbReference>
<accession>O94126</accession>
<evidence type="ECO:0000305" key="1"/>